<name>ADH1_KLUMA</name>
<keyword id="KW-0963">Cytoplasm</keyword>
<keyword id="KW-0479">Metal-binding</keyword>
<keyword id="KW-0520">NAD</keyword>
<keyword id="KW-0560">Oxidoreductase</keyword>
<keyword id="KW-0862">Zinc</keyword>
<proteinExistence type="inferred from homology"/>
<dbReference type="EC" id="1.1.1.1"/>
<dbReference type="EMBL" id="X60224">
    <property type="protein sequence ID" value="CAA42785.1"/>
    <property type="molecule type" value="Genomic_DNA"/>
</dbReference>
<dbReference type="PIR" id="S32521">
    <property type="entry name" value="S32521"/>
</dbReference>
<dbReference type="SMR" id="Q07288"/>
<dbReference type="VEuPathDB" id="FungiDB:KLMA_40102"/>
<dbReference type="GO" id="GO:0005737">
    <property type="term" value="C:cytoplasm"/>
    <property type="evidence" value="ECO:0007669"/>
    <property type="project" value="UniProtKB-SubCell"/>
</dbReference>
<dbReference type="GO" id="GO:0004022">
    <property type="term" value="F:alcohol dehydrogenase (NAD+) activity"/>
    <property type="evidence" value="ECO:0007669"/>
    <property type="project" value="UniProtKB-EC"/>
</dbReference>
<dbReference type="GO" id="GO:0008270">
    <property type="term" value="F:zinc ion binding"/>
    <property type="evidence" value="ECO:0007669"/>
    <property type="project" value="InterPro"/>
</dbReference>
<dbReference type="CDD" id="cd08297">
    <property type="entry name" value="CAD3"/>
    <property type="match status" value="1"/>
</dbReference>
<dbReference type="FunFam" id="3.40.50.720:FF:000039">
    <property type="entry name" value="Alcohol dehydrogenase AdhP"/>
    <property type="match status" value="1"/>
</dbReference>
<dbReference type="FunFam" id="3.90.180.10:FF:000002">
    <property type="entry name" value="Alcohol dehydrogenase AdhP"/>
    <property type="match status" value="1"/>
</dbReference>
<dbReference type="Gene3D" id="3.90.180.10">
    <property type="entry name" value="Medium-chain alcohol dehydrogenases, catalytic domain"/>
    <property type="match status" value="1"/>
</dbReference>
<dbReference type="Gene3D" id="3.40.50.720">
    <property type="entry name" value="NAD(P)-binding Rossmann-like Domain"/>
    <property type="match status" value="1"/>
</dbReference>
<dbReference type="InterPro" id="IPR013149">
    <property type="entry name" value="ADH-like_C"/>
</dbReference>
<dbReference type="InterPro" id="IPR013154">
    <property type="entry name" value="ADH-like_N"/>
</dbReference>
<dbReference type="InterPro" id="IPR002328">
    <property type="entry name" value="ADH_Zn_CS"/>
</dbReference>
<dbReference type="InterPro" id="IPR011032">
    <property type="entry name" value="GroES-like_sf"/>
</dbReference>
<dbReference type="InterPro" id="IPR036291">
    <property type="entry name" value="NAD(P)-bd_dom_sf"/>
</dbReference>
<dbReference type="InterPro" id="IPR020843">
    <property type="entry name" value="PKS_ER"/>
</dbReference>
<dbReference type="PANTHER" id="PTHR42940">
    <property type="entry name" value="ALCOHOL DEHYDROGENASE 1-RELATED"/>
    <property type="match status" value="1"/>
</dbReference>
<dbReference type="PANTHER" id="PTHR42940:SF3">
    <property type="entry name" value="ALCOHOL DEHYDROGENASE 1-RELATED"/>
    <property type="match status" value="1"/>
</dbReference>
<dbReference type="Pfam" id="PF08240">
    <property type="entry name" value="ADH_N"/>
    <property type="match status" value="1"/>
</dbReference>
<dbReference type="Pfam" id="PF00107">
    <property type="entry name" value="ADH_zinc_N"/>
    <property type="match status" value="1"/>
</dbReference>
<dbReference type="SMART" id="SM00829">
    <property type="entry name" value="PKS_ER"/>
    <property type="match status" value="1"/>
</dbReference>
<dbReference type="SUPFAM" id="SSF50129">
    <property type="entry name" value="GroES-like"/>
    <property type="match status" value="1"/>
</dbReference>
<dbReference type="SUPFAM" id="SSF51735">
    <property type="entry name" value="NAD(P)-binding Rossmann-fold domains"/>
    <property type="match status" value="1"/>
</dbReference>
<dbReference type="PROSITE" id="PS00059">
    <property type="entry name" value="ADH_ZINC"/>
    <property type="match status" value="1"/>
</dbReference>
<sequence length="348" mass="37159">MAIPETQKGVIFYEHGGELQYKDIPVPKPKPNELLINVKYSGVCHTDLHAWQGDWPLDTKLPLVGGHEGAGIVVAMGENVTGWEIGDYAGIKWLNGSCMSCEECELSNEPNCPKADLSGYTHDGSFQQYATADAVQAARIPKNVDLAEVAPILCAGVTVYKALKSAHIKAGDWVAISGACGGLGSLAIQYAKAMGYRVLGIDAGDEKAKLFKELGGEYFIDFTKTKDMVAEVIEATNGVAHAVINVSVSEAAISTSVLYTRSNGTVVLVGLPRDAQCKSDVFNQVVKSISIVGSYVGNRADTREALDFFSRGLVKAPIKILGLSELASVYDKMVKGQIVGRIVVDTSK</sequence>
<accession>Q07288</accession>
<evidence type="ECO:0000250" key="1"/>
<evidence type="ECO:0000305" key="2"/>
<feature type="chain" id="PRO_0000160724" description="Alcohol dehydrogenase 1">
    <location>
        <begin position="1"/>
        <end position="348"/>
    </location>
</feature>
<feature type="binding site" evidence="1">
    <location>
        <position position="44"/>
    </location>
    <ligand>
        <name>Zn(2+)</name>
        <dbReference type="ChEBI" id="CHEBI:29105"/>
        <label>1</label>
        <note>catalytic</note>
    </ligand>
</feature>
<feature type="binding site" evidence="1">
    <location>
        <position position="67"/>
    </location>
    <ligand>
        <name>Zn(2+)</name>
        <dbReference type="ChEBI" id="CHEBI:29105"/>
        <label>1</label>
        <note>catalytic</note>
    </ligand>
</feature>
<feature type="binding site" evidence="1">
    <location>
        <position position="98"/>
    </location>
    <ligand>
        <name>Zn(2+)</name>
        <dbReference type="ChEBI" id="CHEBI:29105"/>
        <label>2</label>
    </ligand>
</feature>
<feature type="binding site" evidence="1">
    <location>
        <position position="101"/>
    </location>
    <ligand>
        <name>Zn(2+)</name>
        <dbReference type="ChEBI" id="CHEBI:29105"/>
        <label>2</label>
    </ligand>
</feature>
<feature type="binding site" evidence="1">
    <location>
        <position position="104"/>
    </location>
    <ligand>
        <name>Zn(2+)</name>
        <dbReference type="ChEBI" id="CHEBI:29105"/>
        <label>2</label>
    </ligand>
</feature>
<feature type="binding site" evidence="1">
    <location>
        <position position="112"/>
    </location>
    <ligand>
        <name>Zn(2+)</name>
        <dbReference type="ChEBI" id="CHEBI:29105"/>
        <label>2</label>
    </ligand>
</feature>
<feature type="binding site" evidence="1">
    <location>
        <position position="154"/>
    </location>
    <ligand>
        <name>Zn(2+)</name>
        <dbReference type="ChEBI" id="CHEBI:29105"/>
        <label>1</label>
        <note>catalytic</note>
    </ligand>
</feature>
<feature type="binding site" evidence="1">
    <location>
        <begin position="178"/>
        <end position="184"/>
    </location>
    <ligand>
        <name>NAD(+)</name>
        <dbReference type="ChEBI" id="CHEBI:57540"/>
    </ligand>
</feature>
<feature type="binding site" evidence="1">
    <location>
        <position position="202"/>
    </location>
    <ligand>
        <name>NAD(+)</name>
        <dbReference type="ChEBI" id="CHEBI:57540"/>
    </ligand>
</feature>
<feature type="binding site" evidence="1">
    <location>
        <position position="207"/>
    </location>
    <ligand>
        <name>NAD(+)</name>
        <dbReference type="ChEBI" id="CHEBI:57540"/>
    </ligand>
</feature>
<feature type="binding site" evidence="1">
    <location>
        <begin position="269"/>
        <end position="271"/>
    </location>
    <ligand>
        <name>NAD(+)</name>
        <dbReference type="ChEBI" id="CHEBI:57540"/>
    </ligand>
</feature>
<feature type="binding site" evidence="1">
    <location>
        <position position="341"/>
    </location>
    <ligand>
        <name>NAD(+)</name>
        <dbReference type="ChEBI" id="CHEBI:57540"/>
    </ligand>
</feature>
<reference key="1">
    <citation type="journal article" date="1993" name="Biochim. Biophys. Acta">
        <title>Sequence of a gene coding for a cytoplasmic alcohol dehydrogenase from Kluyveromyces marxianus ATCC 12424.</title>
        <authorList>
            <person name="Ladriere J.-M."/>
            <person name="Delcour J."/>
            <person name="Vandenhaute J."/>
        </authorList>
    </citation>
    <scope>NUCLEOTIDE SEQUENCE [GENOMIC DNA]</scope>
    <source>
        <strain>ATCC 12424 / NRRL Y-610</strain>
    </source>
</reference>
<comment type="catalytic activity">
    <reaction>
        <text>a primary alcohol + NAD(+) = an aldehyde + NADH + H(+)</text>
        <dbReference type="Rhea" id="RHEA:10736"/>
        <dbReference type="ChEBI" id="CHEBI:15378"/>
        <dbReference type="ChEBI" id="CHEBI:15734"/>
        <dbReference type="ChEBI" id="CHEBI:17478"/>
        <dbReference type="ChEBI" id="CHEBI:57540"/>
        <dbReference type="ChEBI" id="CHEBI:57945"/>
        <dbReference type="EC" id="1.1.1.1"/>
    </reaction>
</comment>
<comment type="catalytic activity">
    <reaction>
        <text>a secondary alcohol + NAD(+) = a ketone + NADH + H(+)</text>
        <dbReference type="Rhea" id="RHEA:10740"/>
        <dbReference type="ChEBI" id="CHEBI:15378"/>
        <dbReference type="ChEBI" id="CHEBI:17087"/>
        <dbReference type="ChEBI" id="CHEBI:35681"/>
        <dbReference type="ChEBI" id="CHEBI:57540"/>
        <dbReference type="ChEBI" id="CHEBI:57945"/>
        <dbReference type="EC" id="1.1.1.1"/>
    </reaction>
</comment>
<comment type="cofactor">
    <cofactor evidence="1">
        <name>Zn(2+)</name>
        <dbReference type="ChEBI" id="CHEBI:29105"/>
    </cofactor>
    <text evidence="1">Binds 2 Zn(2+) ions per subunit.</text>
</comment>
<comment type="subunit">
    <text>Homotetramer.</text>
</comment>
<comment type="subcellular location">
    <subcellularLocation>
        <location>Cytoplasm</location>
    </subcellularLocation>
</comment>
<comment type="similarity">
    <text evidence="2">Belongs to the zinc-containing alcohol dehydrogenase family.</text>
</comment>
<protein>
    <recommendedName>
        <fullName>Alcohol dehydrogenase 1</fullName>
        <ecNumber>1.1.1.1</ecNumber>
    </recommendedName>
</protein>
<gene>
    <name type="primary">ADH1</name>
</gene>
<organism>
    <name type="scientific">Kluyveromyces marxianus</name>
    <name type="common">Yeast</name>
    <name type="synonym">Candida kefyr</name>
    <dbReference type="NCBI Taxonomy" id="4911"/>
    <lineage>
        <taxon>Eukaryota</taxon>
        <taxon>Fungi</taxon>
        <taxon>Dikarya</taxon>
        <taxon>Ascomycota</taxon>
        <taxon>Saccharomycotina</taxon>
        <taxon>Saccharomycetes</taxon>
        <taxon>Saccharomycetales</taxon>
        <taxon>Saccharomycetaceae</taxon>
        <taxon>Kluyveromyces</taxon>
    </lineage>
</organism>